<sequence>MAAITAALIKQVREETGAGMMDVKKALTEADGDVARAKEIIRAKGIQAAGKREGRKAQEGTIASTVIDSAAGQTGYAVELNSETDFVAKTPKFIDFADTVLADAVKAGADDIDAVLAAPSQDGTVKEAVEEASALFGEHVKVGQFAKIEGPKVEIYAHKKSVEMPPSIVAMIATDEAGAAVAHEAALQISAMGAQWLTRDDVPEDVVETERRVATEKSLAEGKPEKIVPKIVEGRLNAFFKENVLLEQAYVKDPSKTIGDLFKEVGGQALAFARLEVGKAPEADA</sequence>
<reference key="1">
    <citation type="journal article" date="2009" name="J. Bacteriol.">
        <title>Genome sequence of the probiotic bacterium Bifidobacterium animalis subsp. lactis AD011.</title>
        <authorList>
            <person name="Kim J.F."/>
            <person name="Jeong H."/>
            <person name="Yu D.S."/>
            <person name="Choi S.-H."/>
            <person name="Hur C.-G."/>
            <person name="Park M.-S."/>
            <person name="Yoon S.H."/>
            <person name="Kim D.-W."/>
            <person name="Ji G.E."/>
            <person name="Park H.-S."/>
            <person name="Oh T.K."/>
        </authorList>
    </citation>
    <scope>NUCLEOTIDE SEQUENCE [LARGE SCALE GENOMIC DNA]</scope>
    <source>
        <strain>AD011</strain>
    </source>
</reference>
<gene>
    <name evidence="1" type="primary">tsf</name>
    <name type="ordered locus">BLA_1296</name>
</gene>
<name>EFTS_BIFA0</name>
<feature type="chain" id="PRO_1000189861" description="Elongation factor Ts">
    <location>
        <begin position="1"/>
        <end position="285"/>
    </location>
</feature>
<feature type="region of interest" description="Involved in Mg(2+) ion dislocation from EF-Tu" evidence="1">
    <location>
        <begin position="84"/>
        <end position="87"/>
    </location>
</feature>
<proteinExistence type="inferred from homology"/>
<protein>
    <recommendedName>
        <fullName evidence="1">Elongation factor Ts</fullName>
        <shortName evidence="1">EF-Ts</shortName>
    </recommendedName>
</protein>
<comment type="function">
    <text evidence="1">Associates with the EF-Tu.GDP complex and induces the exchange of GDP to GTP. It remains bound to the aminoacyl-tRNA.EF-Tu.GTP complex up to the GTP hydrolysis stage on the ribosome.</text>
</comment>
<comment type="subcellular location">
    <subcellularLocation>
        <location evidence="1">Cytoplasm</location>
    </subcellularLocation>
</comment>
<comment type="similarity">
    <text evidence="1">Belongs to the EF-Ts family.</text>
</comment>
<keyword id="KW-0963">Cytoplasm</keyword>
<keyword id="KW-0251">Elongation factor</keyword>
<keyword id="KW-0648">Protein biosynthesis</keyword>
<keyword id="KW-1185">Reference proteome</keyword>
<evidence type="ECO:0000255" key="1">
    <source>
        <dbReference type="HAMAP-Rule" id="MF_00050"/>
    </source>
</evidence>
<organism>
    <name type="scientific">Bifidobacterium animalis subsp. lactis (strain AD011)</name>
    <dbReference type="NCBI Taxonomy" id="442563"/>
    <lineage>
        <taxon>Bacteria</taxon>
        <taxon>Bacillati</taxon>
        <taxon>Actinomycetota</taxon>
        <taxon>Actinomycetes</taxon>
        <taxon>Bifidobacteriales</taxon>
        <taxon>Bifidobacteriaceae</taxon>
        <taxon>Bifidobacterium</taxon>
    </lineage>
</organism>
<accession>B8DUA4</accession>
<dbReference type="EMBL" id="CP001213">
    <property type="protein sequence ID" value="ACL29583.1"/>
    <property type="molecule type" value="Genomic_DNA"/>
</dbReference>
<dbReference type="RefSeq" id="WP_004218011.1">
    <property type="nucleotide sequence ID" value="NC_011835.1"/>
</dbReference>
<dbReference type="SMR" id="B8DUA4"/>
<dbReference type="STRING" id="442563.BLA_1296"/>
<dbReference type="GeneID" id="29695621"/>
<dbReference type="KEGG" id="bla:BLA_1296"/>
<dbReference type="HOGENOM" id="CLU_047155_0_0_11"/>
<dbReference type="Proteomes" id="UP000002456">
    <property type="component" value="Chromosome"/>
</dbReference>
<dbReference type="GO" id="GO:0005737">
    <property type="term" value="C:cytoplasm"/>
    <property type="evidence" value="ECO:0007669"/>
    <property type="project" value="UniProtKB-SubCell"/>
</dbReference>
<dbReference type="GO" id="GO:0003746">
    <property type="term" value="F:translation elongation factor activity"/>
    <property type="evidence" value="ECO:0007669"/>
    <property type="project" value="UniProtKB-UniRule"/>
</dbReference>
<dbReference type="CDD" id="cd14275">
    <property type="entry name" value="UBA_EF-Ts"/>
    <property type="match status" value="1"/>
</dbReference>
<dbReference type="FunFam" id="1.10.286.20:FF:000001">
    <property type="entry name" value="Elongation factor Ts"/>
    <property type="match status" value="1"/>
</dbReference>
<dbReference type="FunFam" id="1.10.8.10:FF:000001">
    <property type="entry name" value="Elongation factor Ts"/>
    <property type="match status" value="1"/>
</dbReference>
<dbReference type="Gene3D" id="1.10.286.20">
    <property type="match status" value="1"/>
</dbReference>
<dbReference type="Gene3D" id="1.10.8.10">
    <property type="entry name" value="DNA helicase RuvA subunit, C-terminal domain"/>
    <property type="match status" value="1"/>
</dbReference>
<dbReference type="Gene3D" id="3.30.479.20">
    <property type="entry name" value="Elongation factor Ts, dimerisation domain"/>
    <property type="match status" value="2"/>
</dbReference>
<dbReference type="HAMAP" id="MF_00050">
    <property type="entry name" value="EF_Ts"/>
    <property type="match status" value="1"/>
</dbReference>
<dbReference type="InterPro" id="IPR036402">
    <property type="entry name" value="EF-Ts_dimer_sf"/>
</dbReference>
<dbReference type="InterPro" id="IPR001816">
    <property type="entry name" value="Transl_elong_EFTs/EF1B"/>
</dbReference>
<dbReference type="InterPro" id="IPR014039">
    <property type="entry name" value="Transl_elong_EFTs/EF1B_dimer"/>
</dbReference>
<dbReference type="InterPro" id="IPR018101">
    <property type="entry name" value="Transl_elong_Ts_CS"/>
</dbReference>
<dbReference type="InterPro" id="IPR009060">
    <property type="entry name" value="UBA-like_sf"/>
</dbReference>
<dbReference type="NCBIfam" id="TIGR00116">
    <property type="entry name" value="tsf"/>
    <property type="match status" value="1"/>
</dbReference>
<dbReference type="PANTHER" id="PTHR11741">
    <property type="entry name" value="ELONGATION FACTOR TS"/>
    <property type="match status" value="1"/>
</dbReference>
<dbReference type="PANTHER" id="PTHR11741:SF0">
    <property type="entry name" value="ELONGATION FACTOR TS, MITOCHONDRIAL"/>
    <property type="match status" value="1"/>
</dbReference>
<dbReference type="Pfam" id="PF00889">
    <property type="entry name" value="EF_TS"/>
    <property type="match status" value="1"/>
</dbReference>
<dbReference type="SUPFAM" id="SSF54713">
    <property type="entry name" value="Elongation factor Ts (EF-Ts), dimerisation domain"/>
    <property type="match status" value="1"/>
</dbReference>
<dbReference type="SUPFAM" id="SSF46934">
    <property type="entry name" value="UBA-like"/>
    <property type="match status" value="1"/>
</dbReference>
<dbReference type="PROSITE" id="PS01127">
    <property type="entry name" value="EF_TS_2"/>
    <property type="match status" value="1"/>
</dbReference>